<name>DICER_MOUSE</name>
<dbReference type="EC" id="3.1.26.3"/>
<dbReference type="EMBL" id="AF484523">
    <property type="protein sequence ID" value="AAL84637.1"/>
    <property type="molecule type" value="Genomic_DNA"/>
</dbReference>
<dbReference type="EMBL" id="AF484524">
    <property type="protein sequence ID" value="AAL84638.1"/>
    <property type="molecule type" value="Genomic_DNA"/>
</dbReference>
<dbReference type="EMBL" id="AB081470">
    <property type="protein sequence ID" value="BAC15765.1"/>
    <property type="status" value="ALT_INIT"/>
    <property type="molecule type" value="mRNA"/>
</dbReference>
<dbReference type="EMBL" id="AF430845">
    <property type="protein sequence ID" value="AAM21495.1"/>
    <property type="status" value="ALT_FRAME"/>
    <property type="molecule type" value="mRNA"/>
</dbReference>
<dbReference type="PDB" id="3C4B">
    <property type="method" value="X-ray"/>
    <property type="resolution" value="1.68 A"/>
    <property type="chains" value="A=1648-1910"/>
</dbReference>
<dbReference type="PDB" id="3C4T">
    <property type="method" value="X-ray"/>
    <property type="resolution" value="2.80 A"/>
    <property type="chains" value="A=1648-1910"/>
</dbReference>
<dbReference type="PDB" id="7YYM">
    <property type="method" value="EM"/>
    <property type="resolution" value="4.19 A"/>
    <property type="chains" value="A=1-1916"/>
</dbReference>
<dbReference type="PDB" id="7YYN">
    <property type="method" value="EM"/>
    <property type="resolution" value="6.21 A"/>
    <property type="chains" value="A=244-1916"/>
</dbReference>
<dbReference type="PDB" id="7YZ4">
    <property type="method" value="EM"/>
    <property type="resolution" value="3.84 A"/>
    <property type="chains" value="A=1-1916"/>
</dbReference>
<dbReference type="PDB" id="7ZPI">
    <property type="method" value="EM"/>
    <property type="resolution" value="5.91 A"/>
    <property type="chains" value="A=1-1916"/>
</dbReference>
<dbReference type="PDB" id="7ZPJ">
    <property type="method" value="EM"/>
    <property type="resolution" value="3.81 A"/>
    <property type="chains" value="A=1-1916"/>
</dbReference>
<dbReference type="PDB" id="7ZPK">
    <property type="method" value="EM"/>
    <property type="resolution" value="3.81 A"/>
    <property type="chains" value="A=1-1916"/>
</dbReference>
<dbReference type="PDBsum" id="3C4B"/>
<dbReference type="PDBsum" id="3C4T"/>
<dbReference type="PDBsum" id="7YYM"/>
<dbReference type="PDBsum" id="7YYN"/>
<dbReference type="PDBsum" id="7YZ4"/>
<dbReference type="PDBsum" id="7ZPI"/>
<dbReference type="PDBsum" id="7ZPJ"/>
<dbReference type="PDBsum" id="7ZPK"/>
<dbReference type="EMDB" id="EMD-14383"/>
<dbReference type="EMDB" id="EMD-14384"/>
<dbReference type="EMDB" id="EMD-14387"/>
<dbReference type="EMDB" id="EMD-14854"/>
<dbReference type="EMDB" id="EMD-14855"/>
<dbReference type="EMDB" id="EMD-14856"/>
<dbReference type="SMR" id="Q8R418"/>
<dbReference type="ComplexPortal" id="CPX-1073">
    <property type="entry name" value="RISC-loading complex, PRKRA variant"/>
</dbReference>
<dbReference type="ComplexPortal" id="CPX-135">
    <property type="entry name" value="RISC-loading complex, TARBP2 variant"/>
</dbReference>
<dbReference type="DIP" id="DIP-29721N"/>
<dbReference type="FunCoup" id="Q8R418">
    <property type="interactions" value="1884"/>
</dbReference>
<dbReference type="IntAct" id="Q8R418">
    <property type="interactions" value="4"/>
</dbReference>
<dbReference type="STRING" id="10090.ENSMUSP00000043676"/>
<dbReference type="GlyGen" id="Q8R418">
    <property type="glycosylation" value="3 sites, 1 N-linked glycan (1 site), 1 O-linked glycan (1 site)"/>
</dbReference>
<dbReference type="iPTMnet" id="Q8R418"/>
<dbReference type="PhosphoSitePlus" id="Q8R418"/>
<dbReference type="jPOST" id="Q8R418"/>
<dbReference type="PaxDb" id="10090-ENSMUSP00000043676"/>
<dbReference type="PeptideAtlas" id="Q8R418"/>
<dbReference type="ProteomicsDB" id="279660">
    <molecule id="Q8R418-1"/>
</dbReference>
<dbReference type="ProteomicsDB" id="279661">
    <molecule id="Q8R418-2"/>
</dbReference>
<dbReference type="Pumba" id="Q8R418"/>
<dbReference type="AGR" id="MGI:2177178"/>
<dbReference type="MGI" id="MGI:2177178">
    <property type="gene designation" value="Dicer1"/>
</dbReference>
<dbReference type="eggNOG" id="KOG0701">
    <property type="taxonomic scope" value="Eukaryota"/>
</dbReference>
<dbReference type="InParanoid" id="Q8R418"/>
<dbReference type="OrthoDB" id="2392202at2759"/>
<dbReference type="PhylomeDB" id="Q8R418"/>
<dbReference type="BRENDA" id="3.1.26.3">
    <property type="organism ID" value="3474"/>
</dbReference>
<dbReference type="Reactome" id="R-MMU-203927">
    <property type="pathway name" value="MicroRNA (miRNA) biogenesis"/>
</dbReference>
<dbReference type="Reactome" id="R-MMU-426486">
    <property type="pathway name" value="Small interfering RNA (siRNA) biogenesis"/>
</dbReference>
<dbReference type="ChiTaRS" id="Dicer1">
    <property type="organism name" value="mouse"/>
</dbReference>
<dbReference type="EvolutionaryTrace" id="Q8R418"/>
<dbReference type="PRO" id="PR:Q8R418"/>
<dbReference type="Proteomes" id="UP000000589">
    <property type="component" value="Unplaced"/>
</dbReference>
<dbReference type="RNAct" id="Q8R418">
    <property type="molecule type" value="protein"/>
</dbReference>
<dbReference type="GO" id="GO:0005737">
    <property type="term" value="C:cytoplasm"/>
    <property type="evidence" value="ECO:0000314"/>
    <property type="project" value="UniProtKB"/>
</dbReference>
<dbReference type="GO" id="GO:0005829">
    <property type="term" value="C:cytosol"/>
    <property type="evidence" value="ECO:0000304"/>
    <property type="project" value="Reactome"/>
</dbReference>
<dbReference type="GO" id="GO:0098978">
    <property type="term" value="C:glutamatergic synapse"/>
    <property type="evidence" value="ECO:0000314"/>
    <property type="project" value="SynGO"/>
</dbReference>
<dbReference type="GO" id="GO:0048471">
    <property type="term" value="C:perinuclear region of cytoplasm"/>
    <property type="evidence" value="ECO:0000250"/>
    <property type="project" value="UniProtKB"/>
</dbReference>
<dbReference type="GO" id="GO:0099092">
    <property type="term" value="C:postsynaptic density, intracellular component"/>
    <property type="evidence" value="ECO:0000314"/>
    <property type="project" value="SynGO"/>
</dbReference>
<dbReference type="GO" id="GO:0016442">
    <property type="term" value="C:RISC complex"/>
    <property type="evidence" value="ECO:0000314"/>
    <property type="project" value="MGI"/>
</dbReference>
<dbReference type="GO" id="GO:0070578">
    <property type="term" value="C:RISC-loading complex"/>
    <property type="evidence" value="ECO:0000353"/>
    <property type="project" value="ComplexPortal"/>
</dbReference>
<dbReference type="GO" id="GO:0005524">
    <property type="term" value="F:ATP binding"/>
    <property type="evidence" value="ECO:0007669"/>
    <property type="project" value="UniProtKB-KW"/>
</dbReference>
<dbReference type="GO" id="GO:0003677">
    <property type="term" value="F:DNA binding"/>
    <property type="evidence" value="ECO:0007669"/>
    <property type="project" value="InterPro"/>
</dbReference>
<dbReference type="GO" id="GO:0004386">
    <property type="term" value="F:helicase activity"/>
    <property type="evidence" value="ECO:0007669"/>
    <property type="project" value="UniProtKB-KW"/>
</dbReference>
<dbReference type="GO" id="GO:0046872">
    <property type="term" value="F:metal ion binding"/>
    <property type="evidence" value="ECO:0007669"/>
    <property type="project" value="UniProtKB-KW"/>
</dbReference>
<dbReference type="GO" id="GO:0035198">
    <property type="term" value="F:miRNA binding"/>
    <property type="evidence" value="ECO:0000314"/>
    <property type="project" value="MGI"/>
</dbReference>
<dbReference type="GO" id="GO:0004525">
    <property type="term" value="F:ribonuclease III activity"/>
    <property type="evidence" value="ECO:0000304"/>
    <property type="project" value="Reactome"/>
</dbReference>
<dbReference type="GO" id="GO:0001525">
    <property type="term" value="P:angiogenesis"/>
    <property type="evidence" value="ECO:0000315"/>
    <property type="project" value="MGI"/>
</dbReference>
<dbReference type="GO" id="GO:0048754">
    <property type="term" value="P:branching morphogenesis of an epithelial tube"/>
    <property type="evidence" value="ECO:0000315"/>
    <property type="project" value="MGI"/>
</dbReference>
<dbReference type="GO" id="GO:0055013">
    <property type="term" value="P:cardiac muscle cell development"/>
    <property type="evidence" value="ECO:0000315"/>
    <property type="project" value="MGI"/>
</dbReference>
<dbReference type="GO" id="GO:0061309">
    <property type="term" value="P:cardiac neural crest cell development involved in outflow tract morphogenesis"/>
    <property type="evidence" value="ECO:0000315"/>
    <property type="project" value="MGI"/>
</dbReference>
<dbReference type="GO" id="GO:0051216">
    <property type="term" value="P:cartilage development"/>
    <property type="evidence" value="ECO:0000315"/>
    <property type="project" value="MGI"/>
</dbReference>
<dbReference type="GO" id="GO:0008283">
    <property type="term" value="P:cell population proliferation"/>
    <property type="evidence" value="ECO:0000315"/>
    <property type="project" value="MGI"/>
</dbReference>
<dbReference type="GO" id="GO:0021987">
    <property type="term" value="P:cerebral cortex development"/>
    <property type="evidence" value="ECO:0000315"/>
    <property type="project" value="MGI"/>
</dbReference>
<dbReference type="GO" id="GO:0051607">
    <property type="term" value="P:defense response to virus"/>
    <property type="evidence" value="ECO:0000315"/>
    <property type="project" value="MGI"/>
</dbReference>
<dbReference type="GO" id="GO:0048565">
    <property type="term" value="P:digestive tract development"/>
    <property type="evidence" value="ECO:0000315"/>
    <property type="project" value="MGI"/>
</dbReference>
<dbReference type="GO" id="GO:0035116">
    <property type="term" value="P:embryonic hindlimb morphogenesis"/>
    <property type="evidence" value="ECO:0000315"/>
    <property type="project" value="MGI"/>
</dbReference>
<dbReference type="GO" id="GO:0030326">
    <property type="term" value="P:embryonic limb morphogenesis"/>
    <property type="evidence" value="ECO:0000315"/>
    <property type="project" value="MGI"/>
</dbReference>
<dbReference type="GO" id="GO:0048730">
    <property type="term" value="P:epidermis morphogenesis"/>
    <property type="evidence" value="ECO:0000315"/>
    <property type="project" value="MGI"/>
</dbReference>
<dbReference type="GO" id="GO:0061548">
    <property type="term" value="P:ganglion development"/>
    <property type="evidence" value="ECO:0000315"/>
    <property type="project" value="MGI"/>
</dbReference>
<dbReference type="GO" id="GO:0010467">
    <property type="term" value="P:gene expression"/>
    <property type="evidence" value="ECO:0000315"/>
    <property type="project" value="MGI"/>
</dbReference>
<dbReference type="GO" id="GO:0098795">
    <property type="term" value="P:global gene silencing by mRNA cleavage"/>
    <property type="evidence" value="ECO:0000250"/>
    <property type="project" value="UniProtKB"/>
</dbReference>
<dbReference type="GO" id="GO:0071335">
    <property type="term" value="P:hair follicle cell proliferation"/>
    <property type="evidence" value="ECO:0000315"/>
    <property type="project" value="MGI"/>
</dbReference>
<dbReference type="GO" id="GO:0001942">
    <property type="term" value="P:hair follicle development"/>
    <property type="evidence" value="ECO:0000315"/>
    <property type="project" value="MGI"/>
</dbReference>
<dbReference type="GO" id="GO:0031069">
    <property type="term" value="P:hair follicle morphogenesis"/>
    <property type="evidence" value="ECO:0000315"/>
    <property type="project" value="MGI"/>
</dbReference>
<dbReference type="GO" id="GO:0060119">
    <property type="term" value="P:inner ear receptor cell development"/>
    <property type="evidence" value="ECO:0000315"/>
    <property type="project" value="MGI"/>
</dbReference>
<dbReference type="GO" id="GO:0060576">
    <property type="term" value="P:intestinal epithelial cell development"/>
    <property type="evidence" value="ECO:0000316"/>
    <property type="project" value="MGI"/>
</dbReference>
<dbReference type="GO" id="GO:0030324">
    <property type="term" value="P:lung development"/>
    <property type="evidence" value="ECO:0000315"/>
    <property type="project" value="MGI"/>
</dbReference>
<dbReference type="GO" id="GO:0000212">
    <property type="term" value="P:meiotic spindle organization"/>
    <property type="evidence" value="ECO:0000315"/>
    <property type="project" value="UniProtKB"/>
</dbReference>
<dbReference type="GO" id="GO:0035196">
    <property type="term" value="P:miRNA processing"/>
    <property type="evidence" value="ECO:0000315"/>
    <property type="project" value="BHF-UCL"/>
</dbReference>
<dbReference type="GO" id="GO:0048255">
    <property type="term" value="P:mRNA stabilization"/>
    <property type="evidence" value="ECO:0000315"/>
    <property type="project" value="MGI"/>
</dbReference>
<dbReference type="GO" id="GO:0035264">
    <property type="term" value="P:multicellular organism growth"/>
    <property type="evidence" value="ECO:0000315"/>
    <property type="project" value="MGI"/>
</dbReference>
<dbReference type="GO" id="GO:0014835">
    <property type="term" value="P:myoblast differentiation involved in skeletal muscle regeneration"/>
    <property type="evidence" value="ECO:0000315"/>
    <property type="project" value="MGI"/>
</dbReference>
<dbReference type="GO" id="GO:0060253">
    <property type="term" value="P:negative regulation of glial cell proliferation"/>
    <property type="evidence" value="ECO:0000315"/>
    <property type="project" value="MGI"/>
</dbReference>
<dbReference type="GO" id="GO:0010626">
    <property type="term" value="P:negative regulation of Schwann cell proliferation"/>
    <property type="evidence" value="ECO:0000315"/>
    <property type="project" value="BHF-UCL"/>
</dbReference>
<dbReference type="GO" id="GO:0000122">
    <property type="term" value="P:negative regulation of transcription by RNA polymerase II"/>
    <property type="evidence" value="ECO:0000315"/>
    <property type="project" value="BHF-UCL"/>
</dbReference>
<dbReference type="GO" id="GO:0021675">
    <property type="term" value="P:nerve development"/>
    <property type="evidence" value="ECO:0000315"/>
    <property type="project" value="BHF-UCL"/>
</dbReference>
<dbReference type="GO" id="GO:0048812">
    <property type="term" value="P:neuron projection morphogenesis"/>
    <property type="evidence" value="ECO:0000315"/>
    <property type="project" value="BHF-UCL"/>
</dbReference>
<dbReference type="GO" id="GO:0021889">
    <property type="term" value="P:olfactory bulb interneuron differentiation"/>
    <property type="evidence" value="ECO:0000315"/>
    <property type="project" value="MGI"/>
</dbReference>
<dbReference type="GO" id="GO:0031508">
    <property type="term" value="P:pericentric heterochromatin formation"/>
    <property type="evidence" value="ECO:0000315"/>
    <property type="project" value="MGI"/>
</dbReference>
<dbReference type="GO" id="GO:0032290">
    <property type="term" value="P:peripheral nervous system myelin formation"/>
    <property type="evidence" value="ECO:0000315"/>
    <property type="project" value="BHF-UCL"/>
</dbReference>
<dbReference type="GO" id="GO:0010628">
    <property type="term" value="P:positive regulation of gene expression"/>
    <property type="evidence" value="ECO:0000315"/>
    <property type="project" value="BHF-UCL"/>
</dbReference>
<dbReference type="GO" id="GO:2000630">
    <property type="term" value="P:positive regulation of miRNA metabolic process"/>
    <property type="evidence" value="ECO:0000315"/>
    <property type="project" value="MGI"/>
</dbReference>
<dbReference type="GO" id="GO:0031643">
    <property type="term" value="P:positive regulation of myelination"/>
    <property type="evidence" value="ECO:0000315"/>
    <property type="project" value="BHF-UCL"/>
</dbReference>
<dbReference type="GO" id="GO:0014040">
    <property type="term" value="P:positive regulation of Schwann cell differentiation"/>
    <property type="evidence" value="ECO:0000315"/>
    <property type="project" value="BHF-UCL"/>
</dbReference>
<dbReference type="GO" id="GO:0045944">
    <property type="term" value="P:positive regulation of transcription by RNA polymerase II"/>
    <property type="evidence" value="ECO:0000315"/>
    <property type="project" value="BHF-UCL"/>
</dbReference>
<dbReference type="GO" id="GO:0009791">
    <property type="term" value="P:post-embryonic development"/>
    <property type="evidence" value="ECO:0000315"/>
    <property type="project" value="MGI"/>
</dbReference>
<dbReference type="GO" id="GO:0031054">
    <property type="term" value="P:pre-miRNA processing"/>
    <property type="evidence" value="ECO:0000314"/>
    <property type="project" value="MGI"/>
</dbReference>
<dbReference type="GO" id="GO:0051726">
    <property type="term" value="P:regulation of cell cycle"/>
    <property type="evidence" value="ECO:0000315"/>
    <property type="project" value="MGI"/>
</dbReference>
<dbReference type="GO" id="GO:0070173">
    <property type="term" value="P:regulation of enamel mineralization"/>
    <property type="evidence" value="ECO:0000315"/>
    <property type="project" value="MGI"/>
</dbReference>
<dbReference type="GO" id="GO:0030856">
    <property type="term" value="P:regulation of epithelial cell differentiation"/>
    <property type="evidence" value="ECO:0000315"/>
    <property type="project" value="MGI"/>
</dbReference>
<dbReference type="GO" id="GO:0010468">
    <property type="term" value="P:regulation of gene expression"/>
    <property type="evidence" value="ECO:0000315"/>
    <property type="project" value="MGI"/>
</dbReference>
<dbReference type="GO" id="GO:0050727">
    <property type="term" value="P:regulation of inflammatory response"/>
    <property type="evidence" value="ECO:0000315"/>
    <property type="project" value="MGI"/>
</dbReference>
<dbReference type="GO" id="GO:2000628">
    <property type="term" value="P:regulation of miRNA metabolic process"/>
    <property type="evidence" value="ECO:0000315"/>
    <property type="project" value="MGI"/>
</dbReference>
<dbReference type="GO" id="GO:0010660">
    <property type="term" value="P:regulation of muscle cell apoptotic process"/>
    <property type="evidence" value="ECO:0000315"/>
    <property type="project" value="MGI"/>
</dbReference>
<dbReference type="GO" id="GO:0031641">
    <property type="term" value="P:regulation of myelination"/>
    <property type="evidence" value="ECO:0000315"/>
    <property type="project" value="MGI"/>
</dbReference>
<dbReference type="GO" id="GO:0050767">
    <property type="term" value="P:regulation of neurogenesis"/>
    <property type="evidence" value="ECO:0000315"/>
    <property type="project" value="MGI"/>
</dbReference>
<dbReference type="GO" id="GO:0045664">
    <property type="term" value="P:regulation of neuron differentiation"/>
    <property type="evidence" value="ECO:0000315"/>
    <property type="project" value="MGI"/>
</dbReference>
<dbReference type="GO" id="GO:0008593">
    <property type="term" value="P:regulation of Notch signaling pathway"/>
    <property type="evidence" value="ECO:0000305"/>
    <property type="project" value="BHF-UCL"/>
</dbReference>
<dbReference type="GO" id="GO:0042487">
    <property type="term" value="P:regulation of odontogenesis of dentin-containing tooth"/>
    <property type="evidence" value="ECO:0000315"/>
    <property type="project" value="MGI"/>
</dbReference>
<dbReference type="GO" id="GO:0048713">
    <property type="term" value="P:regulation of oligodendrocyte differentiation"/>
    <property type="evidence" value="ECO:0000315"/>
    <property type="project" value="MGI"/>
</dbReference>
<dbReference type="GO" id="GO:0045589">
    <property type="term" value="P:regulation of regulatory T cell differentiation"/>
    <property type="evidence" value="ECO:0000315"/>
    <property type="project" value="MGI"/>
</dbReference>
<dbReference type="GO" id="GO:0051252">
    <property type="term" value="P:regulation of RNA metabolic process"/>
    <property type="evidence" value="ECO:0000315"/>
    <property type="project" value="MGI"/>
</dbReference>
<dbReference type="GO" id="GO:2000736">
    <property type="term" value="P:regulation of stem cell differentiation"/>
    <property type="evidence" value="ECO:0000315"/>
    <property type="project" value="MGI"/>
</dbReference>
<dbReference type="GO" id="GO:0045069">
    <property type="term" value="P:regulation of viral genome replication"/>
    <property type="evidence" value="ECO:0000315"/>
    <property type="project" value="MGI"/>
</dbReference>
<dbReference type="GO" id="GO:0035194">
    <property type="term" value="P:regulatory ncRNA-mediated post-transcriptional gene silencing"/>
    <property type="evidence" value="ECO:0000315"/>
    <property type="project" value="MGI"/>
</dbReference>
<dbReference type="GO" id="GO:0048608">
    <property type="term" value="P:reproductive structure development"/>
    <property type="evidence" value="ECO:0000315"/>
    <property type="project" value="MGI"/>
</dbReference>
<dbReference type="GO" id="GO:0070922">
    <property type="term" value="P:RISC complex assembly"/>
    <property type="evidence" value="ECO:0000266"/>
    <property type="project" value="ComplexPortal"/>
</dbReference>
<dbReference type="GO" id="GO:0006396">
    <property type="term" value="P:RNA processing"/>
    <property type="evidence" value="ECO:0000314"/>
    <property type="project" value="MGI"/>
</dbReference>
<dbReference type="GO" id="GO:0006364">
    <property type="term" value="P:rRNA processing"/>
    <property type="evidence" value="ECO:0007669"/>
    <property type="project" value="InterPro"/>
</dbReference>
<dbReference type="GO" id="GO:0030422">
    <property type="term" value="P:siRNA processing"/>
    <property type="evidence" value="ECO:0000314"/>
    <property type="project" value="MGI"/>
</dbReference>
<dbReference type="GO" id="GO:0007284">
    <property type="term" value="P:spermatogonial cell division"/>
    <property type="evidence" value="ECO:0000315"/>
    <property type="project" value="MGI"/>
</dbReference>
<dbReference type="GO" id="GO:0021522">
    <property type="term" value="P:spinal cord motor neuron differentiation"/>
    <property type="evidence" value="ECO:0000315"/>
    <property type="project" value="MGI"/>
</dbReference>
<dbReference type="GO" id="GO:0051225">
    <property type="term" value="P:spindle assembly"/>
    <property type="evidence" value="ECO:0000315"/>
    <property type="project" value="MGI"/>
</dbReference>
<dbReference type="GO" id="GO:0048536">
    <property type="term" value="P:spleen development"/>
    <property type="evidence" value="ECO:0000315"/>
    <property type="project" value="MGI"/>
</dbReference>
<dbReference type="GO" id="GO:0019827">
    <property type="term" value="P:stem cell population maintenance"/>
    <property type="evidence" value="ECO:0000315"/>
    <property type="project" value="MGI"/>
</dbReference>
<dbReference type="GO" id="GO:0001834">
    <property type="term" value="P:trophectodermal cell proliferation"/>
    <property type="evidence" value="ECO:0000315"/>
    <property type="project" value="MGI"/>
</dbReference>
<dbReference type="GO" id="GO:0010070">
    <property type="term" value="P:zygote asymmetric cell division"/>
    <property type="evidence" value="ECO:0000315"/>
    <property type="project" value="MGI"/>
</dbReference>
<dbReference type="CDD" id="cd18034">
    <property type="entry name" value="DEXHc_dicer"/>
    <property type="match status" value="1"/>
</dbReference>
<dbReference type="CDD" id="cd15903">
    <property type="entry name" value="Dicer_PBD"/>
    <property type="match status" value="1"/>
</dbReference>
<dbReference type="CDD" id="cd10843">
    <property type="entry name" value="DSRM_DICER"/>
    <property type="match status" value="1"/>
</dbReference>
<dbReference type="CDD" id="cd02843">
    <property type="entry name" value="PAZ_dicer_like"/>
    <property type="match status" value="1"/>
</dbReference>
<dbReference type="CDD" id="cd00593">
    <property type="entry name" value="RIBOc"/>
    <property type="match status" value="2"/>
</dbReference>
<dbReference type="CDD" id="cd18802">
    <property type="entry name" value="SF2_C_dicer"/>
    <property type="match status" value="1"/>
</dbReference>
<dbReference type="FunFam" id="1.10.1520.10:FF:000023">
    <property type="entry name" value="Endoribonuclease dcr-1"/>
    <property type="match status" value="1"/>
</dbReference>
<dbReference type="FunFam" id="3.40.50.300:FF:000628">
    <property type="entry name" value="Endoribonuclease Dicer"/>
    <property type="match status" value="1"/>
</dbReference>
<dbReference type="FunFam" id="3.30.160.20:FF:000015">
    <property type="entry name" value="endoribonuclease Dicer"/>
    <property type="match status" value="1"/>
</dbReference>
<dbReference type="FunFam" id="3.30.160.380:FF:000002">
    <property type="entry name" value="Endoribonuclease Dicer isoform 1"/>
    <property type="match status" value="1"/>
</dbReference>
<dbReference type="FunFam" id="3.40.50.300:FF:000588">
    <property type="entry name" value="Endoribonuclease Dicer isoform 1"/>
    <property type="match status" value="1"/>
</dbReference>
<dbReference type="FunFam" id="2.170.260.10:FF:000002">
    <property type="entry name" value="Putative Endoribonuclease Dicer"/>
    <property type="match status" value="1"/>
</dbReference>
<dbReference type="FunFam" id="1.10.1520.10:FF:000005">
    <property type="entry name" value="Putative endoribonuclease dicer"/>
    <property type="match status" value="1"/>
</dbReference>
<dbReference type="Gene3D" id="3.30.160.20">
    <property type="match status" value="1"/>
</dbReference>
<dbReference type="Gene3D" id="3.30.160.380">
    <property type="entry name" value="Dicer dimerisation domain"/>
    <property type="match status" value="1"/>
</dbReference>
<dbReference type="Gene3D" id="3.40.50.300">
    <property type="entry name" value="P-loop containing nucleotide triphosphate hydrolases"/>
    <property type="match status" value="2"/>
</dbReference>
<dbReference type="Gene3D" id="2.170.260.10">
    <property type="entry name" value="paz domain"/>
    <property type="match status" value="1"/>
</dbReference>
<dbReference type="Gene3D" id="1.10.1520.10">
    <property type="entry name" value="Ribonuclease III domain"/>
    <property type="match status" value="2"/>
</dbReference>
<dbReference type="HAMAP" id="MF_00104">
    <property type="entry name" value="RNase_III"/>
    <property type="match status" value="1"/>
</dbReference>
<dbReference type="InterPro" id="IPR038248">
    <property type="entry name" value="Dicer_dimer_sf"/>
</dbReference>
<dbReference type="InterPro" id="IPR005034">
    <property type="entry name" value="Dicer_dimerisation_dom"/>
</dbReference>
<dbReference type="InterPro" id="IPR044441">
    <property type="entry name" value="DICER_DSRM"/>
</dbReference>
<dbReference type="InterPro" id="IPR048513">
    <property type="entry name" value="Dicer_PBD"/>
</dbReference>
<dbReference type="InterPro" id="IPR048512">
    <property type="entry name" value="Dicer_platform"/>
</dbReference>
<dbReference type="InterPro" id="IPR014720">
    <property type="entry name" value="dsRBD_dom"/>
</dbReference>
<dbReference type="InterPro" id="IPR006935">
    <property type="entry name" value="Helicase/UvrB_N"/>
</dbReference>
<dbReference type="InterPro" id="IPR014001">
    <property type="entry name" value="Helicase_ATP-bd"/>
</dbReference>
<dbReference type="InterPro" id="IPR001650">
    <property type="entry name" value="Helicase_C-like"/>
</dbReference>
<dbReference type="InterPro" id="IPR027417">
    <property type="entry name" value="P-loop_NTPase"/>
</dbReference>
<dbReference type="InterPro" id="IPR003100">
    <property type="entry name" value="PAZ_dom"/>
</dbReference>
<dbReference type="InterPro" id="IPR036085">
    <property type="entry name" value="PAZ_dom_sf"/>
</dbReference>
<dbReference type="InterPro" id="IPR011907">
    <property type="entry name" value="RNase_III"/>
</dbReference>
<dbReference type="InterPro" id="IPR000999">
    <property type="entry name" value="RNase_III_dom"/>
</dbReference>
<dbReference type="InterPro" id="IPR036389">
    <property type="entry name" value="RNase_III_sf"/>
</dbReference>
<dbReference type="PANTHER" id="PTHR14950">
    <property type="entry name" value="DICER-RELATED"/>
    <property type="match status" value="1"/>
</dbReference>
<dbReference type="PANTHER" id="PTHR14950:SF37">
    <property type="entry name" value="ENDORIBONUCLEASE DICER"/>
    <property type="match status" value="1"/>
</dbReference>
<dbReference type="Pfam" id="PF03368">
    <property type="entry name" value="Dicer_dimer"/>
    <property type="match status" value="1"/>
</dbReference>
<dbReference type="Pfam" id="PF20932">
    <property type="entry name" value="Dicer_dsRBD"/>
    <property type="match status" value="1"/>
</dbReference>
<dbReference type="Pfam" id="PF20930">
    <property type="entry name" value="Dicer_PBD"/>
    <property type="match status" value="1"/>
</dbReference>
<dbReference type="Pfam" id="PF20931">
    <property type="entry name" value="Dicer_platform"/>
    <property type="match status" value="1"/>
</dbReference>
<dbReference type="Pfam" id="PF00271">
    <property type="entry name" value="Helicase_C"/>
    <property type="match status" value="1"/>
</dbReference>
<dbReference type="Pfam" id="PF02170">
    <property type="entry name" value="PAZ"/>
    <property type="match status" value="1"/>
</dbReference>
<dbReference type="Pfam" id="PF04851">
    <property type="entry name" value="ResIII"/>
    <property type="match status" value="1"/>
</dbReference>
<dbReference type="Pfam" id="PF00636">
    <property type="entry name" value="Ribonuclease_3"/>
    <property type="match status" value="2"/>
</dbReference>
<dbReference type="SMART" id="SM00487">
    <property type="entry name" value="DEXDc"/>
    <property type="match status" value="1"/>
</dbReference>
<dbReference type="SMART" id="SM00358">
    <property type="entry name" value="DSRM"/>
    <property type="match status" value="1"/>
</dbReference>
<dbReference type="SMART" id="SM00490">
    <property type="entry name" value="HELICc"/>
    <property type="match status" value="1"/>
</dbReference>
<dbReference type="SMART" id="SM00949">
    <property type="entry name" value="PAZ"/>
    <property type="match status" value="1"/>
</dbReference>
<dbReference type="SMART" id="SM00535">
    <property type="entry name" value="RIBOc"/>
    <property type="match status" value="2"/>
</dbReference>
<dbReference type="SUPFAM" id="SSF54768">
    <property type="entry name" value="dsRNA-binding domain-like"/>
    <property type="match status" value="1"/>
</dbReference>
<dbReference type="SUPFAM" id="SSF52540">
    <property type="entry name" value="P-loop containing nucleoside triphosphate hydrolases"/>
    <property type="match status" value="1"/>
</dbReference>
<dbReference type="SUPFAM" id="SSF101690">
    <property type="entry name" value="PAZ domain"/>
    <property type="match status" value="1"/>
</dbReference>
<dbReference type="SUPFAM" id="SSF69065">
    <property type="entry name" value="RNase III domain-like"/>
    <property type="match status" value="2"/>
</dbReference>
<dbReference type="PROSITE" id="PS51327">
    <property type="entry name" value="DICER_DSRBF"/>
    <property type="match status" value="1"/>
</dbReference>
<dbReference type="PROSITE" id="PS50137">
    <property type="entry name" value="DS_RBD"/>
    <property type="match status" value="1"/>
</dbReference>
<dbReference type="PROSITE" id="PS51192">
    <property type="entry name" value="HELICASE_ATP_BIND_1"/>
    <property type="match status" value="1"/>
</dbReference>
<dbReference type="PROSITE" id="PS51194">
    <property type="entry name" value="HELICASE_CTER"/>
    <property type="match status" value="1"/>
</dbReference>
<dbReference type="PROSITE" id="PS50821">
    <property type="entry name" value="PAZ"/>
    <property type="match status" value="1"/>
</dbReference>
<dbReference type="PROSITE" id="PS00517">
    <property type="entry name" value="RNASE_3_1"/>
    <property type="match status" value="1"/>
</dbReference>
<dbReference type="PROSITE" id="PS50142">
    <property type="entry name" value="RNASE_3_2"/>
    <property type="match status" value="2"/>
</dbReference>
<protein>
    <recommendedName>
        <fullName>Endoribonuclease Dicer</fullName>
        <ecNumber>3.1.26.3</ecNumber>
    </recommendedName>
    <alternativeName>
        <fullName>Double-strand-specific ribonuclease mDCR-1</fullName>
    </alternativeName>
</protein>
<comment type="function">
    <text evidence="2">Double-stranded RNA (dsRNA) endoribonuclease playing a central role in short dsRNA-mediated post-transcriptional gene silencing. Cleaves naturally occurring long dsRNAs and short hairpin pre-microRNAs (miRNA) into fragments of twenty-one to twenty-three nucleotides with 3' overhang of two nucleotides, producing respectively short interfering RNAs (siRNA) and mature microRNAs. SiRNAs and miRNAs serve as guide to direct the RNA-induced silencing complex (RISC) to complementary RNAs to degrade them or prevent their translation. Gene silencing mediated by siRNAs, also called RNA interference, controls the elimination of transcripts from mobile and repetitive DNA elements of the genome but also the degradation of exogenous RNA of viral origin for instance. The miRNA pathway on the other side is a mean to specifically regulate the expression of target genes (By similarity).</text>
</comment>
<comment type="function">
    <molecule>Isoform 2</molecule>
    <text>More active than isoform 1 to process long double-stranded RNA into siRNAs. Responsible for the accumulation of endogenous siRNAs observed in mouse oocytes compared to somatic cells and it regulates meiotic spindle organization in female germline.</text>
</comment>
<comment type="catalytic activity">
    <reaction>
        <text>Endonucleolytic cleavage to 5'-phosphomonoester.</text>
        <dbReference type="EC" id="3.1.26.3"/>
    </reaction>
</comment>
<comment type="cofactor">
    <cofactor evidence="6">
        <name>Mg(2+)</name>
        <dbReference type="ChEBI" id="CHEBI:18420"/>
    </cofactor>
    <cofactor evidence="6">
        <name>Mn(2+)</name>
        <dbReference type="ChEBI" id="CHEBI:29035"/>
    </cofactor>
    <text evidence="6">Binds 2 magnesium or manganese ions per subunit.</text>
</comment>
<comment type="subunit">
    <text evidence="2">Component of the RISC loading complex (RLC), or micro-RNA (miRNA) loading complex (miRLC), which is composed of DICER1, AGO2 and TARBP2; DICER1 and TARBP2 are required to process precursor miRNAs (pre-miRNAs) to mature miRNAs and then load them onto AGO2. Note that the trimeric RLC/miRLC is also referred to as RISC. Interacts with DHX9, AGO1, PIWIL1 and PRKRA. Interacts with AGO2, TARBP2, EIF6, MOV10 and RPL7A (60S ribosome subunit); they form a large RNA-induced silencing complex (RISC). Interacts with BCDIN3D (By similarity). Interacts (via Dicer dsRNA-binding fold domain) with ALOX5 (via PLAT domain); this interaction enhances arachidonate 5-lipoxygenase activity and modifies the miRNA precursor processing activity of DICER1 (By similarity).</text>
</comment>
<comment type="subcellular location">
    <subcellularLocation>
        <location evidence="2">Cytoplasm</location>
    </subcellularLocation>
</comment>
<comment type="alternative products">
    <event type="alternative promoter"/>
    <isoform>
        <id>Q8R418-1</id>
        <name>1</name>
        <name>DicerS</name>
        <sequence type="displayed"/>
    </isoform>
    <isoform>
        <id>Q8R418-2</id>
        <name>2</name>
        <name>DicerO</name>
        <sequence type="described" ref="VSP_053586"/>
    </isoform>
</comment>
<comment type="tissue specificity">
    <text>Isoform 1 is expressed in a wide variety of tissues. Isoform 2 is specifically expressed in oocytes during their growth (at protein level).</text>
</comment>
<comment type="disruption phenotype">
    <molecule>Isoform 2</molecule>
    <text>Mice lacking isoform 2 are viable and males are fertile. However, females are sterile, their oocytes displaying meiotic spindle defects.</text>
</comment>
<comment type="miscellaneous">
    <molecule>Isoform 2</molecule>
    <text evidence="6">An MT-C retrotransposon in intron 6 of the mouse DICER gene functions as a promoter producing a transcript lacking exons 1 to 6. A new alternative first exon is directly derived from the retrotransposon.</text>
</comment>
<comment type="similarity">
    <text evidence="6">Belongs to the helicase family. Dicer subfamily.</text>
</comment>
<comment type="caution">
    <text evidence="6">It is uncertain whether Met-1 or Met-11 is the initiator.</text>
</comment>
<comment type="sequence caution" evidence="6">
    <conflict type="frameshift">
        <sequence resource="EMBL-CDS" id="AAM21495"/>
    </conflict>
</comment>
<comment type="sequence caution" evidence="6">
    <conflict type="erroneous initiation">
        <sequence resource="EMBL-CDS" id="BAC15765"/>
    </conflict>
</comment>
<comment type="sequence caution" evidence="6">
    <conflict type="erroneous initiation">
        <sequence resource="EMBL-CDS" id="BAC15765"/>
    </conflict>
    <text>Truncated N-terminus.</text>
</comment>
<proteinExistence type="evidence at protein level"/>
<reference key="1">
    <citation type="journal article" date="2002" name="Mamm. Genome">
        <title>Molecular characterization of a mouse cDNA encoding Dicer, a ribonuclease III ortholog involved in RNA interference.</title>
        <authorList>
            <person name="Nicholson R.H."/>
            <person name="Nicholson A.W."/>
        </authorList>
    </citation>
    <scope>NUCLEOTIDE SEQUENCE [MRNA] (ISOFORM 1)</scope>
    <scope>NUCLEOTIDE SEQUENCE [GENOMIC DNA] OF 17-1916</scope>
    <source>
        <strain>C57BL/6J</strain>
    </source>
</reference>
<reference key="2">
    <citation type="journal article" date="2003" name="Curr. Biol.">
        <title>Short-interfering-RNA-mediated gene silencing in mammalian cells requires Dicer and eIF2C translation initiation factors.</title>
        <authorList>
            <person name="Doi N."/>
            <person name="Zenno S."/>
            <person name="Ueda R."/>
            <person name="Ohki-Hamazaki H."/>
            <person name="Ui-Tei K."/>
            <person name="Saigo K."/>
        </authorList>
    </citation>
    <scope>NUCLEOTIDE SEQUENCE [MRNA] (ISOFORM 1)</scope>
</reference>
<reference key="3">
    <citation type="journal article" date="2004" name="Dev. Biol.">
        <title>RNAi and expression of retrotransposons MuERV-L and IAP in preimplantation mouse embryos.</title>
        <authorList>
            <person name="Svoboda P."/>
            <person name="Stein P."/>
            <person name="Anger M."/>
            <person name="Bernstein E."/>
            <person name="Hannon G.J."/>
            <person name="Schultz R.M."/>
        </authorList>
    </citation>
    <scope>NUCLEOTIDE SEQUENCE [MRNA] (ISOFORM 1)</scope>
    <source>
        <strain>Czech II</strain>
    </source>
</reference>
<reference key="4">
    <citation type="journal article" date="2010" name="Cell">
        <title>A tissue-specific atlas of mouse protein phosphorylation and expression.</title>
        <authorList>
            <person name="Huttlin E.L."/>
            <person name="Jedrychowski M.P."/>
            <person name="Elias J.E."/>
            <person name="Goswami T."/>
            <person name="Rad R."/>
            <person name="Beausoleil S.A."/>
            <person name="Villen J."/>
            <person name="Haas W."/>
            <person name="Sowa M.E."/>
            <person name="Gygi S.P."/>
        </authorList>
    </citation>
    <scope>PHOSPHORYLATION [LARGE SCALE ANALYSIS] AT SER-1464</scope>
    <scope>IDENTIFICATION BY MASS SPECTROMETRY [LARGE SCALE ANALYSIS]</scope>
    <source>
        <tissue>Kidney</tissue>
        <tissue>Lung</tissue>
        <tissue>Pancreas</tissue>
        <tissue>Spleen</tissue>
        <tissue>Testis</tissue>
    </source>
</reference>
<reference key="5">
    <citation type="journal article" date="2013" name="Cell">
        <title>A retrotransposon-driven dicer isoform directs endogenous small interfering RNA production in mouse oocytes.</title>
        <authorList>
            <person name="Flemr M."/>
            <person name="Malik R."/>
            <person name="Franke V."/>
            <person name="Nejepinska J."/>
            <person name="Sedlacek R."/>
            <person name="Vlahovicek K."/>
            <person name="Svoboda P."/>
        </authorList>
    </citation>
    <scope>IDENTIFICATION OF ISOFORM 2</scope>
    <scope>FUNCTION (ISOFORMS 1 AND 2)</scope>
    <scope>DISRUPTION PHENOTYPE (ISOFORM 2)</scope>
    <scope>TISSUE SPECIFICITY (ISOFORMS 1 AND 2)</scope>
</reference>
<reference key="6">
    <citation type="journal article" date="2008" name="Proc. Natl. Acad. Sci. U.S.A.">
        <title>Structural and biochemical insights into the dicing mechanism of mouse Dicer: a conserved lysine is critical for dsRNA cleavage.</title>
        <authorList>
            <person name="Du Z."/>
            <person name="Lee J.K."/>
            <person name="Tjhen R."/>
            <person name="Stroud R.M."/>
            <person name="James T.L."/>
        </authorList>
    </citation>
    <scope>X-RAY CRYSTALLOGRAPHY (1.68 ANGSTROMS) OF 1647-1910</scope>
    <scope>MUTAGENESIS OF LYS-1800</scope>
</reference>
<sequence length="1916" mass="216821">MKSPALQPLSMAGLQLMTPASSPMGPFFGLPWQQEAIHDNIYTPRKYQVELLEAALDHNTIVCLNTGSGKTFIAVLLTKELAHQIRGDLNPHAKRTVFLVNSANQVAQQVSAVRTHSDLKVGEYSDLEVNASWTKERWSQEFTKHQVLIMTCYVALTVLKNGYLSLSDINLLVFDECHLAILDHPYREIMKLCESCPSCPRILGLTASILNGKCDPEELEEKIQKLERILRSDAETATDLVVLDRYTSQPCEIVVDCGPFTDRSGLYERLLMELEAALDFINDCNVAVHSKERDSTLISKQILSDCRAVLVVLGPWCADKVAGMMVRELQKYIKHEQEELHRKFLLFTDTLLRKIHALCEEYFSPASLDLKYVTPKVMKLLEILRKYKPYERQQFESVEWYNNRNQDNYVSWSDSEDDDDDEEIEEKEKPETNFPSPFTNILCGIIFVERRYTAVVLNRLIKEAGKQDPELAYISSNFITGHGIGKNQPRSKQMEAEFRKQEEVLRKFRAHETNLLIATSVVEEGVDIPKCNLVVRFDLPTEYRSYVQSKGRARAPISNYVMLADTDKIKSFEEDLKTYKAIEKILRNKCSKSADGAEADVHAGVDDEDAFPPYVLRPDDGGPRVTINTAIGHINRYCARLPSDPFTHLAPKCRTRELPDGTFYSTLYLPINSPLRASIVGPPMDSVRLAERVVALICCEKLHKIGELDEHLMPVGKETVKYEEELDLHDEEETSVPGRPGSTKRRQCYPKAIPECLRESYPKPDQPCYLYVIGMVLTTPLPDELNFRRRKLYPPEDTTRCFGILTAKPIPQIPHFPVYTRSGEVTISIELKKSGFTLSQQMLELITRLHQYIFSHILRLEKPALEFKPTGAESAYCVLPLNVVNDSGTLDIDFKFMEDIEKSEARIGIPSTKYSKETPFVFKLEDYQDAVIIPRYRNFDQPHRFYVADVYTDLTPLSKFPSPEYETFAEYYKTKYNLDLTNLNQPLLDVDHTSSRLNLLTPRHLNQKGKALPLSSAEKRKAKWESLQNKQILVPELCAIHPIPASLWRKAVCLPSILYRLHCLLTAEELRAQTASDAGVGVRSLPVDFRYPNLDFGWKKSIDSKSFISTCNSSLAESDNYCKHSTTVVPEHAAHQGATRPSLENHDQMSVNCKRLPAESPAKLQSEVSTDLTAINGLSYNKNLANGSYDLVNRDFCQGNQLNYFKQEIPVQPTTSYPIQNLYNYENQPKPSNECPLLSNTYLDGNANTSTSDGSPAVSTMPAMMNAVKALKDRMDSEQSPSVGYSSRTLGPNPGLILQALTLSNASDGFNLERLEMLGDSFLKHAITTYLFCTYPDAHEGRLSYMRSKKVSNCNLYRLGKKKGLPSRMVVSIFDPPVNWLPPGYVVNQDKSNSEKWEKDEMTKDCLLANGKLGEACEEEEDLTWRAPKEEAEDEDDFLEYDQEHIQFIDSMLMGSGAFVRKISLSPFSASDSAYEWKMPKKASLGSMPFASGLEDFDYSSWDAMCYLDPSKAVEEDDFVVGFWNPSEENCGVDTGKQSISYDLHTEQCIADKSIADCVEALLGCYLTSCGERAAQLFLCSLGLKVLPVIKRTSREKALDPAQENGSSQQKSLSGSCAAPVGPRSSAGKDLEYGCLKIPPRCMFDHPDAEKTLNHLISGFETFEKKINYRFKNKAYLLQAFTHASYHYNTITDCYQRLEFLGDAILDYLITKHLYEDPRQHSPGVLTDLRSALVNNTIFASLAVKYDYHKYFKAVSPELFHVIDDFVKFQLEKNEMQGMDSELRRSEEDEEKEEDIEVPKAMGDIFESLAGAIYMDSGMSLEVVWQVYYPMMQPLIEKFSANVPRSPVRELLEMEPETAKFSPAERTYDGKVRVTVEVVGKGKFKGVGRSYRIAKSAAARRALRSLKANQPQVPNS</sequence>
<feature type="chain" id="PRO_0000180471" description="Endoribonuclease Dicer">
    <location>
        <begin position="1"/>
        <end position="1916"/>
    </location>
</feature>
<feature type="domain" description="Helicase ATP-binding">
    <location>
        <begin position="51"/>
        <end position="227"/>
    </location>
</feature>
<feature type="domain" description="Helicase C-terminal">
    <location>
        <begin position="433"/>
        <end position="602"/>
    </location>
</feature>
<feature type="domain" description="Dicer dsRNA-binding fold">
    <location>
        <begin position="630"/>
        <end position="722"/>
    </location>
</feature>
<feature type="domain" description="PAZ" evidence="3">
    <location>
        <begin position="895"/>
        <end position="1042"/>
    </location>
</feature>
<feature type="domain" description="RNase III 1">
    <location>
        <begin position="1276"/>
        <end position="1403"/>
    </location>
</feature>
<feature type="domain" description="RNase III 2">
    <location>
        <begin position="1660"/>
        <end position="1818"/>
    </location>
</feature>
<feature type="domain" description="DRBM">
    <location>
        <begin position="1843"/>
        <end position="1908"/>
    </location>
</feature>
<feature type="region of interest" description="Required for interaction with PRKRA and TARBP2" evidence="1">
    <location>
        <begin position="256"/>
        <end position="595"/>
    </location>
</feature>
<feature type="region of interest" description="Disordered" evidence="4">
    <location>
        <begin position="409"/>
        <end position="433"/>
    </location>
</feature>
<feature type="region of interest" description="Disordered" evidence="4">
    <location>
        <begin position="726"/>
        <end position="745"/>
    </location>
</feature>
<feature type="region of interest" description="Disordered" evidence="4">
    <location>
        <begin position="1598"/>
        <end position="1626"/>
    </location>
</feature>
<feature type="short sequence motif" description="DECH box">
    <location>
        <begin position="175"/>
        <end position="178"/>
    </location>
</feature>
<feature type="compositionally biased region" description="Acidic residues" evidence="4">
    <location>
        <begin position="414"/>
        <end position="425"/>
    </location>
</feature>
<feature type="compositionally biased region" description="Polar residues" evidence="4">
    <location>
        <begin position="1604"/>
        <end position="1615"/>
    </location>
</feature>
<feature type="binding site" evidence="1">
    <location>
        <begin position="64"/>
        <end position="71"/>
    </location>
    <ligand>
        <name>ATP</name>
        <dbReference type="ChEBI" id="CHEBI:30616"/>
    </ligand>
</feature>
<feature type="binding site" evidence="1">
    <location>
        <position position="1316"/>
    </location>
    <ligand>
        <name>Mg(2+)</name>
        <dbReference type="ChEBI" id="CHEBI:18420"/>
        <label>1</label>
    </ligand>
</feature>
<feature type="binding site" evidence="1">
    <location>
        <position position="1395"/>
    </location>
    <ligand>
        <name>Mg(2+)</name>
        <dbReference type="ChEBI" id="CHEBI:18420"/>
        <label>1</label>
    </ligand>
</feature>
<feature type="binding site" evidence="1">
    <location>
        <position position="1398"/>
    </location>
    <ligand>
        <name>Mg(2+)</name>
        <dbReference type="ChEBI" id="CHEBI:18420"/>
        <label>1</label>
    </ligand>
</feature>
<feature type="binding site" evidence="2">
    <location>
        <position position="1699"/>
    </location>
    <ligand>
        <name>Mg(2+)</name>
        <dbReference type="ChEBI" id="CHEBI:18420"/>
        <label>2</label>
    </ligand>
</feature>
<feature type="binding site" evidence="2">
    <location>
        <position position="1804"/>
    </location>
    <ligand>
        <name>Mg(2+)</name>
        <dbReference type="ChEBI" id="CHEBI:18420"/>
        <label>2</label>
    </ligand>
</feature>
<feature type="binding site" evidence="2">
    <location>
        <position position="1807"/>
    </location>
    <ligand>
        <name>Mg(2+)</name>
        <dbReference type="ChEBI" id="CHEBI:18420"/>
        <label>2</label>
    </ligand>
</feature>
<feature type="site" description="Important for activity" evidence="5">
    <location>
        <position position="1800"/>
    </location>
</feature>
<feature type="modified residue" description="Phosphoserine" evidence="2">
    <location>
        <position position="413"/>
    </location>
</feature>
<feature type="modified residue" description="Phosphoserine" evidence="2">
    <location>
        <position position="415"/>
    </location>
</feature>
<feature type="modified residue" description="Phosphoserine" evidence="2">
    <location>
        <position position="1016"/>
    </location>
</feature>
<feature type="modified residue" description="Phosphoserine" evidence="2">
    <location>
        <position position="1160"/>
    </location>
</feature>
<feature type="modified residue" description="Phosphoserine" evidence="2">
    <location>
        <position position="1456"/>
    </location>
</feature>
<feature type="modified residue" description="Phosphoserine" evidence="7">
    <location>
        <position position="1464"/>
    </location>
</feature>
<feature type="modified residue" description="Phosphoserine" evidence="2">
    <location>
        <position position="1466"/>
    </location>
</feature>
<feature type="modified residue" description="Phosphoserine" evidence="2">
    <location>
        <position position="1862"/>
    </location>
</feature>
<feature type="splice variant" id="VSP_053586" description="In isoform 2." evidence="6">
    <original>MKSPALQPLSMAGLQLMTPASSPMGPFFGLPWQQEAIHDNIYTPRKYQVELLEAALDHNTIVCLNTGSGKTFIAVLLTKELAHQIRGDLNPHAKRTVFLVNSANQVAQQVSAVRTHSDLKVGEYSDLEVNASWTKERWSQEFTKHQVLIMTCYVALTVLKNGYLSLSDINLLVFDECHLAILDHPYREIMKLCESCPSCPRILGLTASILNGKCDPEELEEKIQKLERILRSDAETATDLVVLDR</original>
    <variation>MSRDTEV</variation>
    <location>
        <begin position="1"/>
        <end position="245"/>
    </location>
</feature>
<feature type="mutagenesis site" description="Loss of activity." evidence="5">
    <original>K</original>
    <variation>A</variation>
    <variation>R</variation>
    <variation>S</variation>
    <variation>T</variation>
    <location>
        <position position="1800"/>
    </location>
</feature>
<feature type="sequence conflict" description="In Ref. 2; BAC15765." evidence="6" ref="2">
    <original>M</original>
    <variation>L</variation>
    <location>
        <position position="1"/>
    </location>
</feature>
<feature type="sequence conflict" description="In Ref. 3; AAM21495." evidence="6" ref="3">
    <original>A</original>
    <variation>C</variation>
    <location>
        <position position="107"/>
    </location>
</feature>
<feature type="sequence conflict" description="In Ref. 2; BAC15765." evidence="6" ref="2">
    <original>S</original>
    <variation>P</variation>
    <location>
        <position position="167"/>
    </location>
</feature>
<feature type="sequence conflict" description="In Ref. 3; AAM21495." evidence="6" ref="3">
    <original>H</original>
    <variation>Y</variation>
    <location>
        <position position="289"/>
    </location>
</feature>
<feature type="sequence conflict" description="In Ref. 2; BAC15765." evidence="6" ref="2">
    <original>A</original>
    <variation>T</variation>
    <location>
        <position position="610"/>
    </location>
</feature>
<feature type="sequence conflict" description="In Ref. 3; AAM21495." evidence="6" ref="3">
    <original>E</original>
    <variation>D</variation>
    <location>
        <position position="759"/>
    </location>
</feature>
<feature type="sequence conflict" description="In Ref. 3; AAM21495." evidence="6" ref="3">
    <original>T</original>
    <variation>I</variation>
    <location>
        <position position="837"/>
    </location>
</feature>
<feature type="sequence conflict" description="In Ref. 1; AAL84638." evidence="6" ref="1">
    <original>G</original>
    <variation>S</variation>
    <location>
        <position position="888"/>
    </location>
</feature>
<feature type="sequence conflict" description="In Ref. 2; BAC15765." evidence="6" ref="2">
    <original>Y</original>
    <variation>C</variation>
    <location>
        <position position="965"/>
    </location>
</feature>
<feature type="sequence conflict" description="In Ref. 2; BAC15765." evidence="6" ref="2">
    <original>T</original>
    <variation>A</variation>
    <location>
        <position position="993"/>
    </location>
</feature>
<feature type="sequence conflict" description="In Ref. 2; BAC15765." evidence="6" ref="2">
    <original>R</original>
    <variation>G</variation>
    <location>
        <position position="1090"/>
    </location>
</feature>
<feature type="sequence conflict" description="In Ref. 2; BAC15765." evidence="6" ref="2">
    <original>T</original>
    <variation>S</variation>
    <location>
        <position position="1110"/>
    </location>
</feature>
<feature type="sequence conflict" description="In Ref. 1; AAL84638." evidence="6" ref="1">
    <original>P</original>
    <variation>H</variation>
    <location>
        <position position="1336"/>
    </location>
</feature>
<feature type="sequence conflict" description="In Ref. 1; AAL84637 and 2; BAC15765." evidence="6" ref="1 2">
    <original>A</original>
    <variation>S</variation>
    <location>
        <position position="1619"/>
    </location>
</feature>
<feature type="sequence conflict" description="In Ref. 2; BAC15765." evidence="6" ref="2">
    <original>K</original>
    <variation>E</variation>
    <location>
        <position position="1860"/>
    </location>
</feature>
<feature type="helix" evidence="8">
    <location>
        <begin position="1649"/>
        <end position="1656"/>
    </location>
</feature>
<feature type="turn" evidence="8">
    <location>
        <begin position="1657"/>
        <end position="1659"/>
    </location>
</feature>
<feature type="helix" evidence="8">
    <location>
        <begin position="1660"/>
        <end position="1667"/>
    </location>
</feature>
<feature type="helix" evidence="8">
    <location>
        <begin position="1674"/>
        <end position="1681"/>
    </location>
</feature>
<feature type="helix" evidence="8">
    <location>
        <begin position="1696"/>
        <end position="1716"/>
    </location>
</feature>
<feature type="helix" evidence="8">
    <location>
        <begin position="1723"/>
        <end position="1733"/>
    </location>
</feature>
<feature type="helix" evidence="8">
    <location>
        <begin position="1736"/>
        <end position="1745"/>
    </location>
</feature>
<feature type="helix" evidence="8">
    <location>
        <begin position="1748"/>
        <end position="1750"/>
    </location>
</feature>
<feature type="helix" evidence="8">
    <location>
        <begin position="1757"/>
        <end position="1774"/>
    </location>
</feature>
<feature type="helix" evidence="8">
    <location>
        <begin position="1800"/>
        <end position="1816"/>
    </location>
</feature>
<feature type="helix" evidence="8">
    <location>
        <begin position="1821"/>
        <end position="1842"/>
    </location>
</feature>
<feature type="helix" evidence="8">
    <location>
        <begin position="1847"/>
        <end position="1854"/>
    </location>
</feature>
<feature type="turn" evidence="8">
    <location>
        <begin position="1856"/>
        <end position="1858"/>
    </location>
</feature>
<feature type="strand" evidence="8">
    <location>
        <begin position="1859"/>
        <end position="1861"/>
    </location>
</feature>
<feature type="strand" evidence="8">
    <location>
        <begin position="1872"/>
        <end position="1878"/>
    </location>
</feature>
<feature type="turn" evidence="8">
    <location>
        <begin position="1879"/>
        <end position="1881"/>
    </location>
</feature>
<feature type="strand" evidence="8">
    <location>
        <begin position="1882"/>
        <end position="1890"/>
    </location>
</feature>
<feature type="helix" evidence="8">
    <location>
        <begin position="1891"/>
        <end position="1908"/>
    </location>
</feature>
<keyword id="KW-0002">3D-structure</keyword>
<keyword id="KW-0877">Alternative promoter usage</keyword>
<keyword id="KW-0067">ATP-binding</keyword>
<keyword id="KW-0963">Cytoplasm</keyword>
<keyword id="KW-0255">Endonuclease</keyword>
<keyword id="KW-0347">Helicase</keyword>
<keyword id="KW-0378">Hydrolase</keyword>
<keyword id="KW-0460">Magnesium</keyword>
<keyword id="KW-0464">Manganese</keyword>
<keyword id="KW-0479">Metal-binding</keyword>
<keyword id="KW-0540">Nuclease</keyword>
<keyword id="KW-0547">Nucleotide-binding</keyword>
<keyword id="KW-0597">Phosphoprotein</keyword>
<keyword id="KW-1185">Reference proteome</keyword>
<keyword id="KW-0677">Repeat</keyword>
<keyword id="KW-0694">RNA-binding</keyword>
<keyword id="KW-0943">RNA-mediated gene silencing</keyword>
<gene>
    <name type="primary">Dicer1</name>
    <name type="synonym">Dicer</name>
    <name type="synonym">Mdcr</name>
</gene>
<evidence type="ECO:0000250" key="1"/>
<evidence type="ECO:0000250" key="2">
    <source>
        <dbReference type="UniProtKB" id="Q9UPY3"/>
    </source>
</evidence>
<evidence type="ECO:0000255" key="3">
    <source>
        <dbReference type="PROSITE-ProRule" id="PRU00142"/>
    </source>
</evidence>
<evidence type="ECO:0000256" key="4">
    <source>
        <dbReference type="SAM" id="MobiDB-lite"/>
    </source>
</evidence>
<evidence type="ECO:0000269" key="5">
    <source>
    </source>
</evidence>
<evidence type="ECO:0000305" key="6"/>
<evidence type="ECO:0007744" key="7">
    <source>
    </source>
</evidence>
<evidence type="ECO:0007829" key="8">
    <source>
        <dbReference type="PDB" id="3C4B"/>
    </source>
</evidence>
<organism>
    <name type="scientific">Mus musculus</name>
    <name type="common">Mouse</name>
    <dbReference type="NCBI Taxonomy" id="10090"/>
    <lineage>
        <taxon>Eukaryota</taxon>
        <taxon>Metazoa</taxon>
        <taxon>Chordata</taxon>
        <taxon>Craniata</taxon>
        <taxon>Vertebrata</taxon>
        <taxon>Euteleostomi</taxon>
        <taxon>Mammalia</taxon>
        <taxon>Eutheria</taxon>
        <taxon>Euarchontoglires</taxon>
        <taxon>Glires</taxon>
        <taxon>Rodentia</taxon>
        <taxon>Myomorpha</taxon>
        <taxon>Muroidea</taxon>
        <taxon>Muridae</taxon>
        <taxon>Murinae</taxon>
        <taxon>Mus</taxon>
        <taxon>Mus</taxon>
    </lineage>
</organism>
<accession>Q8R418</accession>
<accession>Q8R419</accession>